<feature type="chain" id="PRO_0000189557" description="Cysteine-rich hydrophobic domain-containing protein 2">
    <location>
        <begin position="1"/>
        <end position="165"/>
    </location>
</feature>
<feature type="coiled-coil region" evidence="2">
    <location>
        <begin position="1"/>
        <end position="26"/>
    </location>
</feature>
<feature type="short sequence motif" description="CHIC motif (Cys-rich)">
    <location>
        <begin position="88"/>
        <end position="106"/>
    </location>
</feature>
<feature type="sequence conflict" description="In Ref. 2; AAH48435." evidence="3" ref="2">
    <original>M</original>
    <variation>AAGGSGCCCGCRSCGGDGGGAGAGGGAG</variation>
    <location>
        <position position="1"/>
    </location>
</feature>
<keyword id="KW-0175">Coiled coil</keyword>
<keyword id="KW-0333">Golgi apparatus</keyword>
<keyword id="KW-0449">Lipoprotein</keyword>
<keyword id="KW-0472">Membrane</keyword>
<keyword id="KW-0564">Palmitate</keyword>
<keyword id="KW-1185">Reference proteome</keyword>
<evidence type="ECO:0000250" key="1"/>
<evidence type="ECO:0000255" key="2"/>
<evidence type="ECO:0000305" key="3"/>
<sequence length="165" mass="19282">MADFDEIYEEEEDEERALEEQLLKYSPDPVVVRGSGHVTVFGLSNKFESEFPSSLTGKVAPEEFKASINRVNSCLRKNLPVNVRWLLCGCLCCCCTLGCSMWPVICLSKRTRRSIEKLLEWENNRLYHKLCLHWRLSKRKCETNNMMEYVILIEFLPKTPIFRPD</sequence>
<organism>
    <name type="scientific">Mus musculus</name>
    <name type="common">Mouse</name>
    <dbReference type="NCBI Taxonomy" id="10090"/>
    <lineage>
        <taxon>Eukaryota</taxon>
        <taxon>Metazoa</taxon>
        <taxon>Chordata</taxon>
        <taxon>Craniata</taxon>
        <taxon>Vertebrata</taxon>
        <taxon>Euteleostomi</taxon>
        <taxon>Mammalia</taxon>
        <taxon>Eutheria</taxon>
        <taxon>Euarchontoglires</taxon>
        <taxon>Glires</taxon>
        <taxon>Rodentia</taxon>
        <taxon>Myomorpha</taxon>
        <taxon>Muroidea</taxon>
        <taxon>Muridae</taxon>
        <taxon>Murinae</taxon>
        <taxon>Mus</taxon>
        <taxon>Mus</taxon>
    </lineage>
</organism>
<accession>Q9D9G3</accession>
<accession>Q0VG23</accession>
<accession>Q3T9U2</accession>
<accession>Q80ZT7</accession>
<proteinExistence type="evidence at transcript level"/>
<name>CHIC2_MOUSE</name>
<gene>
    <name type="primary">Chic2</name>
</gene>
<protein>
    <recommendedName>
        <fullName>Cysteine-rich hydrophobic domain-containing protein 2</fullName>
    </recommendedName>
</protein>
<dbReference type="EMBL" id="AK006962">
    <property type="protein sequence ID" value="BAB24808.1"/>
    <property type="molecule type" value="mRNA"/>
</dbReference>
<dbReference type="EMBL" id="AK172289">
    <property type="protein sequence ID" value="BAE42928.1"/>
    <property type="molecule type" value="mRNA"/>
</dbReference>
<dbReference type="EMBL" id="BC048435">
    <property type="protein sequence ID" value="AAH48435.1"/>
    <property type="molecule type" value="mRNA"/>
</dbReference>
<dbReference type="EMBL" id="BC116971">
    <property type="protein sequence ID" value="AAI16972.1"/>
    <property type="molecule type" value="mRNA"/>
</dbReference>
<dbReference type="EMBL" id="BC116973">
    <property type="protein sequence ID" value="AAI16974.1"/>
    <property type="molecule type" value="mRNA"/>
</dbReference>
<dbReference type="CCDS" id="CCDS19349.1"/>
<dbReference type="RefSeq" id="NP_083126.1">
    <property type="nucleotide sequence ID" value="NM_028850.5"/>
</dbReference>
<dbReference type="SMR" id="Q9D9G3"/>
<dbReference type="BioGRID" id="216626">
    <property type="interactions" value="1"/>
</dbReference>
<dbReference type="CORUM" id="Q9D9G3"/>
<dbReference type="FunCoup" id="Q9D9G3">
    <property type="interactions" value="2136"/>
</dbReference>
<dbReference type="STRING" id="10090.ENSMUSP00000074903"/>
<dbReference type="iPTMnet" id="Q9D9G3"/>
<dbReference type="PhosphoSitePlus" id="Q9D9G3"/>
<dbReference type="SwissPalm" id="Q9D9G3"/>
<dbReference type="PaxDb" id="10090-ENSMUSP00000074903"/>
<dbReference type="ProteomicsDB" id="283827"/>
<dbReference type="Antibodypedia" id="12265">
    <property type="antibodies" value="137 antibodies from 22 providers"/>
</dbReference>
<dbReference type="DNASU" id="74277"/>
<dbReference type="Ensembl" id="ENSMUST00000075452.7">
    <property type="protein sequence ID" value="ENSMUSP00000074903.6"/>
    <property type="gene ID" value="ENSMUSG00000029229.9"/>
</dbReference>
<dbReference type="GeneID" id="74277"/>
<dbReference type="KEGG" id="mmu:74277"/>
<dbReference type="UCSC" id="uc008xtw.1">
    <property type="organism name" value="mouse"/>
</dbReference>
<dbReference type="AGR" id="MGI:1921527"/>
<dbReference type="CTD" id="26511"/>
<dbReference type="MGI" id="MGI:1921527">
    <property type="gene designation" value="Chic2"/>
</dbReference>
<dbReference type="VEuPathDB" id="HostDB:ENSMUSG00000029229"/>
<dbReference type="eggNOG" id="KOG4101">
    <property type="taxonomic scope" value="Eukaryota"/>
</dbReference>
<dbReference type="GeneTree" id="ENSGT00390000003601"/>
<dbReference type="HOGENOM" id="CLU_100628_1_0_1"/>
<dbReference type="InParanoid" id="Q9D9G3"/>
<dbReference type="OMA" id="EKCLDHE"/>
<dbReference type="OrthoDB" id="67682at2759"/>
<dbReference type="PhylomeDB" id="Q9D9G3"/>
<dbReference type="TreeFam" id="TF314908"/>
<dbReference type="BioGRID-ORCS" id="74277">
    <property type="hits" value="12 hits in 81 CRISPR screens"/>
</dbReference>
<dbReference type="ChiTaRS" id="Chic2">
    <property type="organism name" value="mouse"/>
</dbReference>
<dbReference type="PRO" id="PR:Q9D9G3"/>
<dbReference type="Proteomes" id="UP000000589">
    <property type="component" value="Chromosome 5"/>
</dbReference>
<dbReference type="RNAct" id="Q9D9G3">
    <property type="molecule type" value="protein"/>
</dbReference>
<dbReference type="Bgee" id="ENSMUSG00000029229">
    <property type="expression patterns" value="Expressed in gastrula and 251 other cell types or tissues"/>
</dbReference>
<dbReference type="GO" id="GO:0005794">
    <property type="term" value="C:Golgi apparatus"/>
    <property type="evidence" value="ECO:0000314"/>
    <property type="project" value="MGI"/>
</dbReference>
<dbReference type="GO" id="GO:0005798">
    <property type="term" value="C:Golgi-associated vesicle"/>
    <property type="evidence" value="ECO:0000314"/>
    <property type="project" value="MGI"/>
</dbReference>
<dbReference type="GO" id="GO:0005886">
    <property type="term" value="C:plasma membrane"/>
    <property type="evidence" value="ECO:0000314"/>
    <property type="project" value="MGI"/>
</dbReference>
<dbReference type="GO" id="GO:0006893">
    <property type="term" value="P:Golgi to plasma membrane transport"/>
    <property type="evidence" value="ECO:0000304"/>
    <property type="project" value="MGI"/>
</dbReference>
<dbReference type="InterPro" id="IPR039735">
    <property type="entry name" value="CHIC1/2"/>
</dbReference>
<dbReference type="InterPro" id="IPR019383">
    <property type="entry name" value="Golgin_A_7/ERF4"/>
</dbReference>
<dbReference type="PANTHER" id="PTHR13005">
    <property type="entry name" value="CYSTEINE-RICH HYDROPHOBIC DOMAIN PROTEIN BRAIN X-LINKED PROTEIN"/>
    <property type="match status" value="1"/>
</dbReference>
<dbReference type="PANTHER" id="PTHR13005:SF3">
    <property type="entry name" value="CYSTEINE-RICH HYDROPHOBIC DOMAIN-CONTAINING PROTEIN 2"/>
    <property type="match status" value="1"/>
</dbReference>
<dbReference type="Pfam" id="PF10256">
    <property type="entry name" value="Erf4"/>
    <property type="match status" value="1"/>
</dbReference>
<reference key="1">
    <citation type="journal article" date="2005" name="Science">
        <title>The transcriptional landscape of the mammalian genome.</title>
        <authorList>
            <person name="Carninci P."/>
            <person name="Kasukawa T."/>
            <person name="Katayama S."/>
            <person name="Gough J."/>
            <person name="Frith M.C."/>
            <person name="Maeda N."/>
            <person name="Oyama R."/>
            <person name="Ravasi T."/>
            <person name="Lenhard B."/>
            <person name="Wells C."/>
            <person name="Kodzius R."/>
            <person name="Shimokawa K."/>
            <person name="Bajic V.B."/>
            <person name="Brenner S.E."/>
            <person name="Batalov S."/>
            <person name="Forrest A.R."/>
            <person name="Zavolan M."/>
            <person name="Davis M.J."/>
            <person name="Wilming L.G."/>
            <person name="Aidinis V."/>
            <person name="Allen J.E."/>
            <person name="Ambesi-Impiombato A."/>
            <person name="Apweiler R."/>
            <person name="Aturaliya R.N."/>
            <person name="Bailey T.L."/>
            <person name="Bansal M."/>
            <person name="Baxter L."/>
            <person name="Beisel K.W."/>
            <person name="Bersano T."/>
            <person name="Bono H."/>
            <person name="Chalk A.M."/>
            <person name="Chiu K.P."/>
            <person name="Choudhary V."/>
            <person name="Christoffels A."/>
            <person name="Clutterbuck D.R."/>
            <person name="Crowe M.L."/>
            <person name="Dalla E."/>
            <person name="Dalrymple B.P."/>
            <person name="de Bono B."/>
            <person name="Della Gatta G."/>
            <person name="di Bernardo D."/>
            <person name="Down T."/>
            <person name="Engstrom P."/>
            <person name="Fagiolini M."/>
            <person name="Faulkner G."/>
            <person name="Fletcher C.F."/>
            <person name="Fukushima T."/>
            <person name="Furuno M."/>
            <person name="Futaki S."/>
            <person name="Gariboldi M."/>
            <person name="Georgii-Hemming P."/>
            <person name="Gingeras T.R."/>
            <person name="Gojobori T."/>
            <person name="Green R.E."/>
            <person name="Gustincich S."/>
            <person name="Harbers M."/>
            <person name="Hayashi Y."/>
            <person name="Hensch T.K."/>
            <person name="Hirokawa N."/>
            <person name="Hill D."/>
            <person name="Huminiecki L."/>
            <person name="Iacono M."/>
            <person name="Ikeo K."/>
            <person name="Iwama A."/>
            <person name="Ishikawa T."/>
            <person name="Jakt M."/>
            <person name="Kanapin A."/>
            <person name="Katoh M."/>
            <person name="Kawasawa Y."/>
            <person name="Kelso J."/>
            <person name="Kitamura H."/>
            <person name="Kitano H."/>
            <person name="Kollias G."/>
            <person name="Krishnan S.P."/>
            <person name="Kruger A."/>
            <person name="Kummerfeld S.K."/>
            <person name="Kurochkin I.V."/>
            <person name="Lareau L.F."/>
            <person name="Lazarevic D."/>
            <person name="Lipovich L."/>
            <person name="Liu J."/>
            <person name="Liuni S."/>
            <person name="McWilliam S."/>
            <person name="Madan Babu M."/>
            <person name="Madera M."/>
            <person name="Marchionni L."/>
            <person name="Matsuda H."/>
            <person name="Matsuzawa S."/>
            <person name="Miki H."/>
            <person name="Mignone F."/>
            <person name="Miyake S."/>
            <person name="Morris K."/>
            <person name="Mottagui-Tabar S."/>
            <person name="Mulder N."/>
            <person name="Nakano N."/>
            <person name="Nakauchi H."/>
            <person name="Ng P."/>
            <person name="Nilsson R."/>
            <person name="Nishiguchi S."/>
            <person name="Nishikawa S."/>
            <person name="Nori F."/>
            <person name="Ohara O."/>
            <person name="Okazaki Y."/>
            <person name="Orlando V."/>
            <person name="Pang K.C."/>
            <person name="Pavan W.J."/>
            <person name="Pavesi G."/>
            <person name="Pesole G."/>
            <person name="Petrovsky N."/>
            <person name="Piazza S."/>
            <person name="Reed J."/>
            <person name="Reid J.F."/>
            <person name="Ring B.Z."/>
            <person name="Ringwald M."/>
            <person name="Rost B."/>
            <person name="Ruan Y."/>
            <person name="Salzberg S.L."/>
            <person name="Sandelin A."/>
            <person name="Schneider C."/>
            <person name="Schoenbach C."/>
            <person name="Sekiguchi K."/>
            <person name="Semple C.A."/>
            <person name="Seno S."/>
            <person name="Sessa L."/>
            <person name="Sheng Y."/>
            <person name="Shibata Y."/>
            <person name="Shimada H."/>
            <person name="Shimada K."/>
            <person name="Silva D."/>
            <person name="Sinclair B."/>
            <person name="Sperling S."/>
            <person name="Stupka E."/>
            <person name="Sugiura K."/>
            <person name="Sultana R."/>
            <person name="Takenaka Y."/>
            <person name="Taki K."/>
            <person name="Tammoja K."/>
            <person name="Tan S.L."/>
            <person name="Tang S."/>
            <person name="Taylor M.S."/>
            <person name="Tegner J."/>
            <person name="Teichmann S.A."/>
            <person name="Ueda H.R."/>
            <person name="van Nimwegen E."/>
            <person name="Verardo R."/>
            <person name="Wei C.L."/>
            <person name="Yagi K."/>
            <person name="Yamanishi H."/>
            <person name="Zabarovsky E."/>
            <person name="Zhu S."/>
            <person name="Zimmer A."/>
            <person name="Hide W."/>
            <person name="Bult C."/>
            <person name="Grimmond S.M."/>
            <person name="Teasdale R.D."/>
            <person name="Liu E.T."/>
            <person name="Brusic V."/>
            <person name="Quackenbush J."/>
            <person name="Wahlestedt C."/>
            <person name="Mattick J.S."/>
            <person name="Hume D.A."/>
            <person name="Kai C."/>
            <person name="Sasaki D."/>
            <person name="Tomaru Y."/>
            <person name="Fukuda S."/>
            <person name="Kanamori-Katayama M."/>
            <person name="Suzuki M."/>
            <person name="Aoki J."/>
            <person name="Arakawa T."/>
            <person name="Iida J."/>
            <person name="Imamura K."/>
            <person name="Itoh M."/>
            <person name="Kato T."/>
            <person name="Kawaji H."/>
            <person name="Kawagashira N."/>
            <person name="Kawashima T."/>
            <person name="Kojima M."/>
            <person name="Kondo S."/>
            <person name="Konno H."/>
            <person name="Nakano K."/>
            <person name="Ninomiya N."/>
            <person name="Nishio T."/>
            <person name="Okada M."/>
            <person name="Plessy C."/>
            <person name="Shibata K."/>
            <person name="Shiraki T."/>
            <person name="Suzuki S."/>
            <person name="Tagami M."/>
            <person name="Waki K."/>
            <person name="Watahiki A."/>
            <person name="Okamura-Oho Y."/>
            <person name="Suzuki H."/>
            <person name="Kawai J."/>
            <person name="Hayashizaki Y."/>
        </authorList>
    </citation>
    <scope>NUCLEOTIDE SEQUENCE [LARGE SCALE MRNA]</scope>
    <source>
        <strain>C57BL/6J</strain>
        <strain>NOD</strain>
        <tissue>Spleen</tissue>
        <tissue>Testis</tissue>
    </source>
</reference>
<reference key="2">
    <citation type="journal article" date="2004" name="Genome Res.">
        <title>The status, quality, and expansion of the NIH full-length cDNA project: the Mammalian Gene Collection (MGC).</title>
        <authorList>
            <consortium name="The MGC Project Team"/>
        </authorList>
    </citation>
    <scope>NUCLEOTIDE SEQUENCE [LARGE SCALE MRNA]</scope>
    <source>
        <tissue>Brain</tissue>
        <tissue>Testis</tissue>
    </source>
</reference>
<comment type="subcellular location">
    <subcellularLocation>
        <location evidence="1">Membrane</location>
        <topology evidence="1">Peripheral membrane protein</topology>
    </subcellularLocation>
    <subcellularLocation>
        <location evidence="1">Golgi apparatus</location>
    </subcellularLocation>
    <text evidence="1">Associated and found in vesicular structures of Golgi complex.</text>
</comment>
<comment type="PTM">
    <text evidence="1">Palmitoylation in the CHIC motif is required for membrane association.</text>
</comment>
<comment type="similarity">
    <text evidence="3">Belongs to the CHIC family.</text>
</comment>